<gene>
    <name evidence="1" type="primary">ligB</name>
    <name type="ordered locus">YpAngola_A0046</name>
</gene>
<evidence type="ECO:0000255" key="1">
    <source>
        <dbReference type="HAMAP-Rule" id="MF_01587"/>
    </source>
</evidence>
<evidence type="ECO:0000305" key="2"/>
<protein>
    <recommendedName>
        <fullName evidence="1">DNA ligase B</fullName>
        <ecNumber evidence="1">6.5.1.2</ecNumber>
    </recommendedName>
    <alternativeName>
        <fullName evidence="1">Polydeoxyribonucleotide synthase [NAD(+)] B</fullName>
    </alternativeName>
</protein>
<reference key="1">
    <citation type="journal article" date="2010" name="J. Bacteriol.">
        <title>Genome sequence of the deep-rooted Yersinia pestis strain Angola reveals new insights into the evolution and pangenome of the plague bacterium.</title>
        <authorList>
            <person name="Eppinger M."/>
            <person name="Worsham P.L."/>
            <person name="Nikolich M.P."/>
            <person name="Riley D.R."/>
            <person name="Sebastian Y."/>
            <person name="Mou S."/>
            <person name="Achtman M."/>
            <person name="Lindler L.E."/>
            <person name="Ravel J."/>
        </authorList>
    </citation>
    <scope>NUCLEOTIDE SEQUENCE [LARGE SCALE GENOMIC DNA]</scope>
    <source>
        <strain>Angola</strain>
    </source>
</reference>
<organism>
    <name type="scientific">Yersinia pestis bv. Antiqua (strain Angola)</name>
    <dbReference type="NCBI Taxonomy" id="349746"/>
    <lineage>
        <taxon>Bacteria</taxon>
        <taxon>Pseudomonadati</taxon>
        <taxon>Pseudomonadota</taxon>
        <taxon>Gammaproteobacteria</taxon>
        <taxon>Enterobacterales</taxon>
        <taxon>Yersiniaceae</taxon>
        <taxon>Yersinia</taxon>
    </lineage>
</organism>
<sequence>MNILNLKIIMFLLISNTIVVGGAWATSTCPDWPATRIAVEINALEQQLNKWSAAYHQQGHSPVTDDIYDQLQDKLRVWQSCRGLPDKTESQPIPGKGQFLHPVAHTGLKKLKDETALTRWMAGRKNLWVQPKVDGVAVTLVYHGGKLVQLLSRGNGVKGQNWTEKAPFISAIPQYIANAPALLTLQGELFLLMDGHQQAKSGGVNARSTVAGALMRKSPSPLLAQVGVFIWAWPDGPTTMKEKVALLQVMGFPFTAKYSEPVMSHLDVVQWRQFWFQAPLPFVTDGVVVRQEEEPAGRYWQATPGQWSMAWKYPPLQHIAEVKDIHFTLGRTGKGTVVLEVLPIKIDDKWIRRVNIGSVTRWKQWDIAPGDHITLALAGHGIPRLDNVVWRVHQRNTITAPNWDKFHQLSCFQRLPHGCEPQFLSRLIWLSGPGGLDIGGIGGGFWQELIHHELINDLVGWLLLTPEQIASIPGIGNARAEKIYQQFQRAKQQPFSRWLLALGFPQVVSVDAQWQVVLRRSLSEWATMAGIGQMRAKQIKHFWDHPDVQALADFLSTQKVVGFELTE</sequence>
<comment type="function">
    <text evidence="1">Catalyzes the formation of phosphodiester linkages between 5'-phosphoryl and 3'-hydroxyl groups in double-stranded DNA using NAD as a coenzyme and as the energy source for the reaction.</text>
</comment>
<comment type="catalytic activity">
    <reaction evidence="1">
        <text>NAD(+) + (deoxyribonucleotide)n-3'-hydroxyl + 5'-phospho-(deoxyribonucleotide)m = (deoxyribonucleotide)n+m + AMP + beta-nicotinamide D-nucleotide.</text>
        <dbReference type="EC" id="6.5.1.2"/>
    </reaction>
</comment>
<comment type="similarity">
    <text evidence="1">Belongs to the NAD-dependent DNA ligase family. LigB subfamily.</text>
</comment>
<comment type="sequence caution" evidence="2">
    <conflict type="erroneous initiation">
        <sequence resource="EMBL-CDS" id="ABX87376"/>
    </conflict>
</comment>
<feature type="chain" id="PRO_0000381953" description="DNA ligase B">
    <location>
        <begin position="1"/>
        <end position="567"/>
    </location>
</feature>
<feature type="active site" description="N6-AMP-lysine intermediate" evidence="1">
    <location>
        <position position="132"/>
    </location>
</feature>
<dbReference type="EC" id="6.5.1.2" evidence="1"/>
<dbReference type="EMBL" id="CP000901">
    <property type="protein sequence ID" value="ABX87376.1"/>
    <property type="status" value="ALT_INIT"/>
    <property type="molecule type" value="Genomic_DNA"/>
</dbReference>
<dbReference type="RefSeq" id="WP_041854750.1">
    <property type="nucleotide sequence ID" value="NC_010159.1"/>
</dbReference>
<dbReference type="SMR" id="A9R666"/>
<dbReference type="KEGG" id="ypg:YpAngola_A0046"/>
<dbReference type="PATRIC" id="fig|349746.12.peg.989"/>
<dbReference type="GO" id="GO:0003911">
    <property type="term" value="F:DNA ligase (NAD+) activity"/>
    <property type="evidence" value="ECO:0007669"/>
    <property type="project" value="UniProtKB-UniRule"/>
</dbReference>
<dbReference type="GO" id="GO:0006281">
    <property type="term" value="P:DNA repair"/>
    <property type="evidence" value="ECO:0007669"/>
    <property type="project" value="UniProtKB-KW"/>
</dbReference>
<dbReference type="GO" id="GO:0006260">
    <property type="term" value="P:DNA replication"/>
    <property type="evidence" value="ECO:0007669"/>
    <property type="project" value="UniProtKB-KW"/>
</dbReference>
<dbReference type="CDD" id="cd00114">
    <property type="entry name" value="LIGANc"/>
    <property type="match status" value="1"/>
</dbReference>
<dbReference type="FunFam" id="2.40.50.140:FF:000139">
    <property type="entry name" value="DNA ligase B"/>
    <property type="match status" value="1"/>
</dbReference>
<dbReference type="FunFam" id="3.30.470.30:FF:000007">
    <property type="entry name" value="DNA ligase B"/>
    <property type="match status" value="1"/>
</dbReference>
<dbReference type="Gene3D" id="1.10.150.20">
    <property type="entry name" value="5' to 3' exonuclease, C-terminal subdomain"/>
    <property type="match status" value="1"/>
</dbReference>
<dbReference type="Gene3D" id="3.30.470.30">
    <property type="entry name" value="DNA ligase/mRNA capping enzyme"/>
    <property type="match status" value="1"/>
</dbReference>
<dbReference type="Gene3D" id="1.10.287.610">
    <property type="entry name" value="Helix hairpin bin"/>
    <property type="match status" value="1"/>
</dbReference>
<dbReference type="Gene3D" id="2.40.50.140">
    <property type="entry name" value="Nucleic acid-binding proteins"/>
    <property type="match status" value="1"/>
</dbReference>
<dbReference type="HAMAP" id="MF_01587">
    <property type="entry name" value="DNA_ligase_B"/>
    <property type="match status" value="1"/>
</dbReference>
<dbReference type="InterPro" id="IPR020923">
    <property type="entry name" value="DNA_ligase_B"/>
</dbReference>
<dbReference type="InterPro" id="IPR013839">
    <property type="entry name" value="DNAligase_adenylation"/>
</dbReference>
<dbReference type="InterPro" id="IPR013840">
    <property type="entry name" value="DNAligase_N"/>
</dbReference>
<dbReference type="InterPro" id="IPR012340">
    <property type="entry name" value="NA-bd_OB-fold"/>
</dbReference>
<dbReference type="InterPro" id="IPR050326">
    <property type="entry name" value="NAD_dep_DNA_ligaseB"/>
</dbReference>
<dbReference type="InterPro" id="IPR004150">
    <property type="entry name" value="NAD_DNA_ligase_OB"/>
</dbReference>
<dbReference type="InterPro" id="IPR010994">
    <property type="entry name" value="RuvA_2-like"/>
</dbReference>
<dbReference type="NCBIfam" id="NF005987">
    <property type="entry name" value="PRK08097.1"/>
    <property type="match status" value="1"/>
</dbReference>
<dbReference type="PANTHER" id="PTHR47810">
    <property type="entry name" value="DNA LIGASE"/>
    <property type="match status" value="1"/>
</dbReference>
<dbReference type="PANTHER" id="PTHR47810:SF1">
    <property type="entry name" value="DNA LIGASE B"/>
    <property type="match status" value="1"/>
</dbReference>
<dbReference type="Pfam" id="PF01653">
    <property type="entry name" value="DNA_ligase_aden"/>
    <property type="match status" value="1"/>
</dbReference>
<dbReference type="Pfam" id="PF03120">
    <property type="entry name" value="DNA_ligase_OB"/>
    <property type="match status" value="1"/>
</dbReference>
<dbReference type="SMART" id="SM00532">
    <property type="entry name" value="LIGANc"/>
    <property type="match status" value="1"/>
</dbReference>
<dbReference type="SUPFAM" id="SSF56091">
    <property type="entry name" value="DNA ligase/mRNA capping enzyme, catalytic domain"/>
    <property type="match status" value="1"/>
</dbReference>
<dbReference type="SUPFAM" id="SSF50249">
    <property type="entry name" value="Nucleic acid-binding proteins"/>
    <property type="match status" value="1"/>
</dbReference>
<dbReference type="SUPFAM" id="SSF47781">
    <property type="entry name" value="RuvA domain 2-like"/>
    <property type="match status" value="1"/>
</dbReference>
<keyword id="KW-0227">DNA damage</keyword>
<keyword id="KW-0234">DNA repair</keyword>
<keyword id="KW-0235">DNA replication</keyword>
<keyword id="KW-0436">Ligase</keyword>
<keyword id="KW-0520">NAD</keyword>
<accession>A9R666</accession>
<proteinExistence type="inferred from homology"/>
<name>LIGB_YERPG</name>